<feature type="chain" id="PRO_0000160570" description="Chaperone protein IpgE">
    <location>
        <begin position="1"/>
        <end position="120"/>
    </location>
</feature>
<feature type="sequence variant" description="In plasmid pINV_F6_M1382.">
    <original>L</original>
    <variation>S</variation>
    <location>
        <position position="16"/>
    </location>
</feature>
<feature type="sequence variant" description="In plasmid pINV_F6_M1382.">
    <original>I</original>
    <variation>T</variation>
    <location>
        <position position="19"/>
    </location>
</feature>
<feature type="sequence variant" description="In plasmid pINV_F6_M1382.">
    <original>N</original>
    <variation>S</variation>
    <location>
        <position position="79"/>
    </location>
</feature>
<feature type="sequence variant" description="In plasmid pINV_F6_M1382.">
    <original>V</original>
    <variation>I</variation>
    <location>
        <position position="95"/>
    </location>
</feature>
<organism>
    <name type="scientific">Shigella flexneri</name>
    <dbReference type="NCBI Taxonomy" id="623"/>
    <lineage>
        <taxon>Bacteria</taxon>
        <taxon>Pseudomonadati</taxon>
        <taxon>Pseudomonadota</taxon>
        <taxon>Gammaproteobacteria</taxon>
        <taxon>Enterobacterales</taxon>
        <taxon>Enterobacteriaceae</taxon>
        <taxon>Shigella</taxon>
    </lineage>
</organism>
<proteinExistence type="evidence at protein level"/>
<name>IPGE_SHIFL</name>
<gene>
    <name type="primary">ipgE</name>
    <name type="ordered locus">CP0134</name>
</gene>
<accession>Q6XVY3</accession>
<accession>Q07567</accession>
<sequence>MEDLADVICRALGIPLIDIDDQAIMLDDDVLIYIEKEGDSINLLCPFCALPENINDLIYALSLNYSEKICLATDDEGGNLIARLDLTGINEFEDVYVNTEYYISRVRWLKDEFARRMKGY</sequence>
<evidence type="ECO:0000269" key="1">
    <source>
    </source>
</evidence>
<evidence type="ECO:0000305" key="2"/>
<dbReference type="EMBL" id="L04309">
    <property type="protein sequence ID" value="AAA26518.1"/>
    <property type="molecule type" value="Genomic_DNA"/>
</dbReference>
<dbReference type="EMBL" id="AL391753">
    <property type="protein sequence ID" value="CAC05809.1"/>
    <property type="molecule type" value="Genomic_DNA"/>
</dbReference>
<dbReference type="EMBL" id="AF348706">
    <property type="protein sequence ID" value="AAK18453.1"/>
    <property type="molecule type" value="Genomic_DNA"/>
</dbReference>
<dbReference type="EMBL" id="AF386526">
    <property type="protein sequence ID" value="AAL72338.1"/>
    <property type="molecule type" value="Genomic_DNA"/>
</dbReference>
<dbReference type="EMBL" id="AY206439">
    <property type="protein sequence ID" value="AAP78997.1"/>
    <property type="molecule type" value="Genomic_DNA"/>
</dbReference>
<dbReference type="RefSeq" id="NP_085297.1">
    <property type="nucleotide sequence ID" value="NC_002698.1"/>
</dbReference>
<dbReference type="RefSeq" id="NP_858267.1">
    <property type="nucleotide sequence ID" value="NC_004851.1"/>
</dbReference>
<dbReference type="RefSeq" id="WP_000389732.1">
    <property type="nucleotide sequence ID" value="NZ_WPGS01000043.1"/>
</dbReference>
<dbReference type="RefSeq" id="YP_009062491.1">
    <property type="nucleotide sequence ID" value="NC_024996.1"/>
</dbReference>
<dbReference type="SMR" id="Q6XVY3"/>
<dbReference type="PaxDb" id="198214-CP0134"/>
<dbReference type="GeneID" id="1238041"/>
<dbReference type="KEGG" id="sfl:CP0134"/>
<dbReference type="PATRIC" id="fig|623.157.peg.5368"/>
<dbReference type="HOGENOM" id="CLU_2048158_0_0_6"/>
<dbReference type="Proteomes" id="UP000001006">
    <property type="component" value="Plasmid pCP301"/>
</dbReference>
<dbReference type="GO" id="GO:0005737">
    <property type="term" value="C:cytoplasm"/>
    <property type="evidence" value="ECO:0007669"/>
    <property type="project" value="UniProtKB-SubCell"/>
</dbReference>
<dbReference type="CDD" id="cd17022">
    <property type="entry name" value="T3SC_IA_SigE-like"/>
    <property type="match status" value="1"/>
</dbReference>
<dbReference type="Gene3D" id="3.30.1460.10">
    <property type="match status" value="1"/>
</dbReference>
<dbReference type="InterPro" id="IPR013095">
    <property type="entry name" value="T3SS_chaperone"/>
</dbReference>
<dbReference type="NCBIfam" id="NF011749">
    <property type="entry name" value="PRK15202.1"/>
    <property type="match status" value="1"/>
</dbReference>
<dbReference type="Pfam" id="PF07824">
    <property type="entry name" value="Chaperone_III"/>
    <property type="match status" value="1"/>
</dbReference>
<dbReference type="PIRSF" id="PIRSF034754">
    <property type="entry name" value="T3SS_chaperone"/>
    <property type="match status" value="1"/>
</dbReference>
<dbReference type="SUPFAM" id="SSF69635">
    <property type="entry name" value="Type III secretory system chaperone-like"/>
    <property type="match status" value="1"/>
</dbReference>
<geneLocation type="plasmid">
    <name>pWR100</name>
</geneLocation>
<geneLocation type="plasmid">
    <name>pWR501</name>
</geneLocation>
<geneLocation type="plasmid">
    <name>pCP301</name>
</geneLocation>
<geneLocation type="plasmid">
    <name>pINV_F6_M1382</name>
</geneLocation>
<comment type="function">
    <text evidence="1">Molecular chaperone required for IpgD stabilization and secretion.</text>
</comment>
<comment type="subcellular location">
    <subcellularLocation>
        <location>Cytoplasm</location>
    </subcellularLocation>
</comment>
<comment type="similarity">
    <text evidence="2">Belongs to the IpgE/SigE chaperone family.</text>
</comment>
<protein>
    <recommendedName>
        <fullName>Chaperone protein IpgE</fullName>
    </recommendedName>
</protein>
<reference key="1">
    <citation type="journal article" date="1993" name="Infect. Immun.">
        <title>Characterization of the Shigella flexneri ipgD and ipgF genes, which are located in the proximal part of the mxi locus.</title>
        <authorList>
            <person name="Allaoui A."/>
            <person name="Menard R."/>
            <person name="Sansonetti P.J."/>
            <person name="Parsot C."/>
        </authorList>
    </citation>
    <scope>NUCLEOTIDE SEQUENCE [GENOMIC DNA]</scope>
    <source>
        <strain>M90T / Serotype 5a</strain>
        <plasmid>pWR100</plasmid>
    </source>
</reference>
<reference key="2">
    <citation type="journal article" date="2000" name="Mol. Microbiol.">
        <title>The virulence plasmid pWR100 and the repertoire of proteins secreted by the type III secretion apparatus of Shigella flexneri.</title>
        <authorList>
            <person name="Buchrieser C."/>
            <person name="Glaser P."/>
            <person name="Rusniok C."/>
            <person name="Nedjari H."/>
            <person name="d'Hauteville H."/>
            <person name="Kunst F."/>
            <person name="Sansonetti P.J."/>
            <person name="Parsot C."/>
        </authorList>
    </citation>
    <scope>NUCLEOTIDE SEQUENCE [GENOMIC DNA]</scope>
    <source>
        <strain>M90T / Serotype 5a</strain>
        <plasmid>pWR100</plasmid>
    </source>
</reference>
<reference key="3">
    <citation type="journal article" date="2001" name="Infect. Immun.">
        <title>Complete DNA sequence and analysis of the large virulence plasmid of Shigella flexneri.</title>
        <authorList>
            <person name="Venkatesan M.M."/>
            <person name="Goldberg M.B."/>
            <person name="Rose D.J."/>
            <person name="Grotbeck E.J."/>
            <person name="Burland V."/>
            <person name="Blattner F.R."/>
        </authorList>
    </citation>
    <scope>NUCLEOTIDE SEQUENCE [GENOMIC DNA]</scope>
    <source>
        <strain>M90T / Serotype 5a</strain>
        <plasmid>pWR501</plasmid>
    </source>
</reference>
<reference key="4">
    <citation type="journal article" date="2002" name="Nucleic Acids Res.">
        <title>Genome sequence of Shigella flexneri 2a: insights into pathogenicity through comparison with genomes of Escherichia coli K12 and O157.</title>
        <authorList>
            <person name="Jin Q."/>
            <person name="Yuan Z."/>
            <person name="Xu J."/>
            <person name="Wang Y."/>
            <person name="Shen Y."/>
            <person name="Lu W."/>
            <person name="Wang J."/>
            <person name="Liu H."/>
            <person name="Yang J."/>
            <person name="Yang F."/>
            <person name="Zhang X."/>
            <person name="Zhang J."/>
            <person name="Yang G."/>
            <person name="Wu H."/>
            <person name="Qu D."/>
            <person name="Dong J."/>
            <person name="Sun L."/>
            <person name="Xue Y."/>
            <person name="Zhao A."/>
            <person name="Gao Y."/>
            <person name="Zhu J."/>
            <person name="Kan B."/>
            <person name="Ding K."/>
            <person name="Chen S."/>
            <person name="Cheng H."/>
            <person name="Yao Z."/>
            <person name="He B."/>
            <person name="Chen R."/>
            <person name="Ma D."/>
            <person name="Qiang B."/>
            <person name="Wen Y."/>
            <person name="Hou Y."/>
            <person name="Yu J."/>
        </authorList>
    </citation>
    <scope>NUCLEOTIDE SEQUENCE [LARGE SCALE GENOMIC DNA]</scope>
    <source>
        <strain>301 / Serotype 2a</strain>
        <plasmid>pCP301</plasmid>
    </source>
</reference>
<reference key="5">
    <citation type="journal article" date="2003" name="Infect. Immun.">
        <title>Comparison of two major forms of the Shigella virulence plasmid pINV: positive selection is a major force driving the divergence.</title>
        <authorList>
            <person name="Lan R."/>
            <person name="Stevenson G."/>
            <person name="Reeves P.R."/>
        </authorList>
    </citation>
    <scope>NUCLEOTIDE SEQUENCE [GENOMIC DNA]</scope>
    <source>
        <strain>M1382 / Serotype 6</strain>
        <plasmid>pINV_F6_M1382</plasmid>
    </source>
</reference>
<reference key="6">
    <citation type="journal article" date="2000" name="Mol. Microbiol.">
        <title>IpgD, a protein secreted by the type III secretion machinery of Shigella flexneri, is chaperoned by IpgE and implicated in entry focus formation.</title>
        <authorList>
            <person name="Niebuhr K."/>
            <person name="Jouihri N."/>
            <person name="Allaoui A."/>
            <person name="Gounon P."/>
            <person name="Sansonetti P.J."/>
            <person name="Parsot C."/>
        </authorList>
    </citation>
    <scope>PROTEIN SEQUENCE OF 1-5</scope>
    <scope>FUNCTION</scope>
    <source>
        <strain>M90T / Serotype 5a</strain>
        <plasmid>pWR100</plasmid>
    </source>
</reference>
<keyword id="KW-0143">Chaperone</keyword>
<keyword id="KW-0963">Cytoplasm</keyword>
<keyword id="KW-0903">Direct protein sequencing</keyword>
<keyword id="KW-0614">Plasmid</keyword>
<keyword id="KW-1185">Reference proteome</keyword>
<keyword id="KW-0843">Virulence</keyword>